<keyword id="KW-0378">Hydrolase</keyword>
<reference key="1">
    <citation type="journal article" date="2004" name="Appl. Environ. Microbiol.">
        <title>Exploring nitrilase sequence space for enantioselective catalysis.</title>
        <authorList>
            <person name="Robertson D.E."/>
            <person name="Chaplin J.A."/>
            <person name="DeSantis G."/>
            <person name="Podar M."/>
            <person name="Madden M."/>
            <person name="Chi E."/>
            <person name="Richardson T."/>
            <person name="Milan A."/>
            <person name="Miller M."/>
            <person name="Weiner D.P."/>
            <person name="Wong K."/>
            <person name="McQuaid J."/>
            <person name="Farwell B."/>
            <person name="Preston L.A."/>
            <person name="Tan X."/>
            <person name="Snead M.A."/>
            <person name="Keller M."/>
            <person name="Mathur E."/>
            <person name="Kretz P.L."/>
            <person name="Burk M.J."/>
            <person name="Short J.M."/>
        </authorList>
    </citation>
    <scope>NUCLEOTIDE SEQUENCE [GENOMIC DNA]</scope>
</reference>
<reference key="2">
    <citation type="journal article" date="2002" name="J. Am. Chem. Soc.">
        <title>An enzyme library approach to biocatalysis: development of nitrilases for enantioselective production of carboxylic acid derivatives.</title>
        <authorList>
            <person name="DeSantis G."/>
            <person name="Zhu Z."/>
            <person name="Greenberg W.A."/>
            <person name="Wong K."/>
            <person name="Chaplin J."/>
            <person name="Hanson S.R."/>
            <person name="Farwell B."/>
            <person name="Nicholson L.W."/>
            <person name="Rand C.L."/>
            <person name="Weiner D.P."/>
            <person name="Robertson D.E."/>
            <person name="Burk M.J."/>
        </authorList>
    </citation>
    <scope>FUNCTION</scope>
</reference>
<proteinExistence type="inferred from homology"/>
<name>NITR2_UNKP</name>
<accession>Q6RWK4</accession>
<feature type="chain" id="PRO_0000422218" description="Nitrilase 2">
    <location>
        <begin position="1"/>
        <end position="314"/>
    </location>
</feature>
<feature type="domain" description="CN hydrolase" evidence="1">
    <location>
        <begin position="7"/>
        <end position="269"/>
    </location>
</feature>
<feature type="active site" description="Proton acceptor" evidence="1">
    <location>
        <position position="47"/>
    </location>
</feature>
<feature type="active site" description="Proton donor" evidence="1">
    <location>
        <position position="132"/>
    </location>
</feature>
<feature type="active site" description="Nucleophile" evidence="1">
    <location>
        <position position="166"/>
    </location>
</feature>
<organism>
    <name type="scientific">Unknown prokaryotic organism</name>
    <dbReference type="NCBI Taxonomy" id="2725"/>
    <lineage>
        <taxon>Bacteria</taxon>
        <taxon>environmental samples</taxon>
    </lineage>
</organism>
<protein>
    <recommendedName>
        <fullName>Nitrilase 2</fullName>
        <ecNumber>3.5.5.1</ecNumber>
    </recommendedName>
    <alternativeName>
        <fullName>Nitrilase II</fullName>
    </alternativeName>
</protein>
<comment type="function">
    <text evidence="2">Nitrilases catalyze the mild hydrolytic conversion of organonitriles directly to the corresponding carboxylic acids. Catalyzes the production of aryllactic acid derivatives. Mediates the hydrolysis of cyanohydrin to (S)-phenyllactic acid.</text>
</comment>
<comment type="catalytic activity">
    <reaction>
        <text>a nitrile + 2 H2O = a carboxylate + NH4(+)</text>
        <dbReference type="Rhea" id="RHEA:21724"/>
        <dbReference type="ChEBI" id="CHEBI:15377"/>
        <dbReference type="ChEBI" id="CHEBI:18379"/>
        <dbReference type="ChEBI" id="CHEBI:28938"/>
        <dbReference type="ChEBI" id="CHEBI:29067"/>
        <dbReference type="EC" id="3.5.5.1"/>
    </reaction>
</comment>
<comment type="similarity">
    <text evidence="3">Belongs to the carbon-nitrogen hydrolase superfamily. Nitrilase family.</text>
</comment>
<sequence length="314" mass="34283">MGEFGEVTLGVAQAAPVYFDREASTEKARGLIREAGEKGVDLLAFGETWLTGYPYWKDAPWSREYNDLRARYVANGVMIPGPETDALCQAAAEAGVDVAIGVVELEPGSLSSVYCTLLFISREGEILGRHRKLKPTDSERRYWSEGDATGLRVYERPYGRLSGLNCWEHLMMLPGYALAAQGTQFHVAAWPNMASSASELLSRAYAYQAGCYVLCAGGLGPAPGELPDGIAAESLDHLTGESCIIDPWGKVIAGPVSCEETLITARVSTASIYRRKSLTDVGGHYSRPDVFRFEVDRSERPRVVFRDGDVDDRG</sequence>
<evidence type="ECO:0000255" key="1">
    <source>
        <dbReference type="PROSITE-ProRule" id="PRU00054"/>
    </source>
</evidence>
<evidence type="ECO:0000269" key="2">
    <source>
    </source>
</evidence>
<evidence type="ECO:0000305" key="3"/>
<dbReference type="EC" id="3.5.5.1"/>
<dbReference type="EMBL" id="AY487498">
    <property type="protein sequence ID" value="AAR97445.1"/>
    <property type="molecule type" value="Genomic_DNA"/>
</dbReference>
<dbReference type="SMR" id="Q6RWK4"/>
<dbReference type="GO" id="GO:0000257">
    <property type="term" value="F:nitrilase activity"/>
    <property type="evidence" value="ECO:0007669"/>
    <property type="project" value="UniProtKB-EC"/>
</dbReference>
<dbReference type="CDD" id="cd07564">
    <property type="entry name" value="nitrilases_CHs"/>
    <property type="match status" value="1"/>
</dbReference>
<dbReference type="Gene3D" id="3.60.110.10">
    <property type="entry name" value="Carbon-nitrogen hydrolase"/>
    <property type="match status" value="1"/>
</dbReference>
<dbReference type="InterPro" id="IPR003010">
    <property type="entry name" value="C-N_Hydrolase"/>
</dbReference>
<dbReference type="InterPro" id="IPR036526">
    <property type="entry name" value="C-N_Hydrolase_sf"/>
</dbReference>
<dbReference type="InterPro" id="IPR000132">
    <property type="entry name" value="Nitrilase/CN_hydratase_CS"/>
</dbReference>
<dbReference type="InterPro" id="IPR044149">
    <property type="entry name" value="Nitrilases_CHs"/>
</dbReference>
<dbReference type="PANTHER" id="PTHR46044:SF1">
    <property type="entry name" value="CN HYDROLASE DOMAIN-CONTAINING PROTEIN"/>
    <property type="match status" value="1"/>
</dbReference>
<dbReference type="PANTHER" id="PTHR46044">
    <property type="entry name" value="NITRILASE"/>
    <property type="match status" value="1"/>
</dbReference>
<dbReference type="Pfam" id="PF00795">
    <property type="entry name" value="CN_hydrolase"/>
    <property type="match status" value="1"/>
</dbReference>
<dbReference type="SUPFAM" id="SSF56317">
    <property type="entry name" value="Carbon-nitrogen hydrolase"/>
    <property type="match status" value="1"/>
</dbReference>
<dbReference type="PROSITE" id="PS50263">
    <property type="entry name" value="CN_HYDROLASE"/>
    <property type="match status" value="1"/>
</dbReference>
<dbReference type="PROSITE" id="PS00920">
    <property type="entry name" value="NITRIL_CHT_1"/>
    <property type="match status" value="1"/>
</dbReference>
<gene>
    <name type="ORF">BD5070</name>
</gene>